<feature type="chain" id="PRO_1000145734" description="3'-5' exoribonuclease YhaM">
    <location>
        <begin position="1"/>
        <end position="314"/>
    </location>
</feature>
<feature type="domain" description="HD" evidence="2">
    <location>
        <begin position="163"/>
        <end position="279"/>
    </location>
</feature>
<reference key="1">
    <citation type="submission" date="2008-10" db="EMBL/GenBank/DDBJ databases">
        <title>Genome sequence of Bacillus cereus AH820.</title>
        <authorList>
            <person name="Dodson R.J."/>
            <person name="Durkin A.S."/>
            <person name="Rosovitz M.J."/>
            <person name="Rasko D.A."/>
            <person name="Hoffmaster A."/>
            <person name="Ravel J."/>
            <person name="Sutton G."/>
        </authorList>
    </citation>
    <scope>NUCLEOTIDE SEQUENCE [LARGE SCALE GENOMIC DNA]</scope>
    <source>
        <strain>AH820</strain>
    </source>
</reference>
<organism>
    <name type="scientific">Bacillus cereus (strain AH820)</name>
    <dbReference type="NCBI Taxonomy" id="405535"/>
    <lineage>
        <taxon>Bacteria</taxon>
        <taxon>Bacillati</taxon>
        <taxon>Bacillota</taxon>
        <taxon>Bacilli</taxon>
        <taxon>Bacillales</taxon>
        <taxon>Bacillaceae</taxon>
        <taxon>Bacillus</taxon>
        <taxon>Bacillus cereus group</taxon>
    </lineage>
</organism>
<comment type="function">
    <text evidence="1">Shows a 3'-5' exoribonuclease activity.</text>
</comment>
<comment type="similarity">
    <text evidence="1">Belongs to the YhaM family.</text>
</comment>
<accession>B7JCU0</accession>
<keyword id="KW-0269">Exonuclease</keyword>
<keyword id="KW-0378">Hydrolase</keyword>
<keyword id="KW-0540">Nuclease</keyword>
<evidence type="ECO:0000255" key="1">
    <source>
        <dbReference type="HAMAP-Rule" id="MF_01427"/>
    </source>
</evidence>
<evidence type="ECO:0000255" key="2">
    <source>
        <dbReference type="PROSITE-ProRule" id="PRU01175"/>
    </source>
</evidence>
<protein>
    <recommendedName>
        <fullName evidence="1">3'-5' exoribonuclease YhaM</fullName>
        <ecNumber evidence="1">3.1.-.-</ecNumber>
    </recommendedName>
</protein>
<proteinExistence type="inferred from homology"/>
<name>YHAM_BACC0</name>
<dbReference type="EC" id="3.1.-.-" evidence="1"/>
<dbReference type="EMBL" id="CP001283">
    <property type="protein sequence ID" value="ACK90983.1"/>
    <property type="molecule type" value="Genomic_DNA"/>
</dbReference>
<dbReference type="RefSeq" id="WP_000726639.1">
    <property type="nucleotide sequence ID" value="NC_011773.1"/>
</dbReference>
<dbReference type="SMR" id="B7JCU0"/>
<dbReference type="KEGG" id="bcu:BCAH820_1087"/>
<dbReference type="HOGENOM" id="CLU_056349_2_0_9"/>
<dbReference type="Proteomes" id="UP000001363">
    <property type="component" value="Chromosome"/>
</dbReference>
<dbReference type="GO" id="GO:0000175">
    <property type="term" value="F:3'-5'-RNA exonuclease activity"/>
    <property type="evidence" value="ECO:0007669"/>
    <property type="project" value="UniProtKB-UniRule"/>
</dbReference>
<dbReference type="GO" id="GO:0003676">
    <property type="term" value="F:nucleic acid binding"/>
    <property type="evidence" value="ECO:0007669"/>
    <property type="project" value="InterPro"/>
</dbReference>
<dbReference type="GO" id="GO:0031125">
    <property type="term" value="P:rRNA 3'-end processing"/>
    <property type="evidence" value="ECO:0007669"/>
    <property type="project" value="TreeGrafter"/>
</dbReference>
<dbReference type="CDD" id="cd00077">
    <property type="entry name" value="HDc"/>
    <property type="match status" value="1"/>
</dbReference>
<dbReference type="CDD" id="cd04492">
    <property type="entry name" value="YhaM_OBF_like"/>
    <property type="match status" value="1"/>
</dbReference>
<dbReference type="FunFam" id="1.10.3210.10:FF:000008">
    <property type="entry name" value="3'-5' exoribonuclease YhaM"/>
    <property type="match status" value="1"/>
</dbReference>
<dbReference type="Gene3D" id="1.10.3210.10">
    <property type="entry name" value="Hypothetical protein af1432"/>
    <property type="match status" value="1"/>
</dbReference>
<dbReference type="Gene3D" id="2.40.50.140">
    <property type="entry name" value="Nucleic acid-binding proteins"/>
    <property type="match status" value="1"/>
</dbReference>
<dbReference type="HAMAP" id="MF_01427">
    <property type="entry name" value="3_5_Exoribonuc_YhaM"/>
    <property type="match status" value="1"/>
</dbReference>
<dbReference type="InterPro" id="IPR020873">
    <property type="entry name" value="3'-5'_exoribonuclease_YhaM"/>
</dbReference>
<dbReference type="InterPro" id="IPR003607">
    <property type="entry name" value="HD/PDEase_dom"/>
</dbReference>
<dbReference type="InterPro" id="IPR006674">
    <property type="entry name" value="HD_domain"/>
</dbReference>
<dbReference type="InterPro" id="IPR012340">
    <property type="entry name" value="NA-bd_OB-fold"/>
</dbReference>
<dbReference type="InterPro" id="IPR004365">
    <property type="entry name" value="NA-bd_OB_tRNA"/>
</dbReference>
<dbReference type="InterPro" id="IPR050798">
    <property type="entry name" value="YhaM_exoribonuc/phosphodiest"/>
</dbReference>
<dbReference type="NCBIfam" id="NF010007">
    <property type="entry name" value="PRK13480.1"/>
    <property type="match status" value="1"/>
</dbReference>
<dbReference type="PANTHER" id="PTHR37294">
    <property type="entry name" value="3'-5' EXORIBONUCLEASE YHAM"/>
    <property type="match status" value="1"/>
</dbReference>
<dbReference type="PANTHER" id="PTHR37294:SF1">
    <property type="entry name" value="3'-5' EXORIBONUCLEASE YHAM"/>
    <property type="match status" value="1"/>
</dbReference>
<dbReference type="Pfam" id="PF01966">
    <property type="entry name" value="HD"/>
    <property type="match status" value="1"/>
</dbReference>
<dbReference type="Pfam" id="PF01336">
    <property type="entry name" value="tRNA_anti-codon"/>
    <property type="match status" value="1"/>
</dbReference>
<dbReference type="SMART" id="SM00471">
    <property type="entry name" value="HDc"/>
    <property type="match status" value="1"/>
</dbReference>
<dbReference type="SUPFAM" id="SSF109604">
    <property type="entry name" value="HD-domain/PDEase-like"/>
    <property type="match status" value="1"/>
</dbReference>
<dbReference type="SUPFAM" id="SSF50249">
    <property type="entry name" value="Nucleic acid-binding proteins"/>
    <property type="match status" value="1"/>
</dbReference>
<dbReference type="PROSITE" id="PS51831">
    <property type="entry name" value="HD"/>
    <property type="match status" value="1"/>
</dbReference>
<sequence>MKKKIAEYEVGEQVDIFLLIKTATKGIASNGKPFLTVILQDPSGDIEAKLWDVSPEVEKQYVAETIVKVAGDILNYKGRIQLRVKQIRVANENEVTDISDFVEKAPVKKEDMVEKITQYIFEMRNPNIQRLTRHLLNKHQNEFLDYPAATKNHHEFVSGLAYHVVSMLDLAKAISNLYPSLDKDLLYAGVILHDLGKVIELSGPISTTYTLEGNLLGHISIMVNEIGKAADELQIDAEEVLILQHIVLSHHGKAEWGSPKPPLVKEAEILHYIDNLDAKMNMMDRALGRTKPGEYTERVFALDNRSFYKPTFHN</sequence>
<gene>
    <name evidence="1" type="primary">yhaM</name>
    <name type="ordered locus">BCAH820_1087</name>
</gene>